<feature type="signal peptide" evidence="1">
    <location>
        <begin position="1"/>
        <end position="23"/>
    </location>
</feature>
<feature type="peptide" id="PRO_0000461875" description="Antimicrobial peptide Eval151" evidence="6">
    <location>
        <begin position="24"/>
        <end position="36"/>
    </location>
</feature>
<feature type="propeptide" id="PRO_0000461876" evidence="6">
    <location>
        <begin position="37"/>
        <end position="60"/>
    </location>
</feature>
<feature type="region of interest" description="Disordered" evidence="2">
    <location>
        <begin position="36"/>
        <end position="60"/>
    </location>
</feature>
<feature type="compositionally biased region" description="Basic and acidic residues" evidence="2">
    <location>
        <begin position="36"/>
        <end position="54"/>
    </location>
</feature>
<feature type="modified residue" description="Arginine amide" evidence="6">
    <location>
        <position position="36"/>
    </location>
</feature>
<organism>
    <name type="scientific">Euscorpiops validus</name>
    <name type="common">Scorpion</name>
    <dbReference type="NCBI Taxonomy" id="1643527"/>
    <lineage>
        <taxon>Eukaryota</taxon>
        <taxon>Metazoa</taxon>
        <taxon>Ecdysozoa</taxon>
        <taxon>Arthropoda</taxon>
        <taxon>Chelicerata</taxon>
        <taxon>Arachnida</taxon>
        <taxon>Scorpiones</taxon>
        <taxon>Iurida</taxon>
        <taxon>Chactoidea</taxon>
        <taxon>Euscorpiidae</taxon>
        <taxon>Scorpiopinae</taxon>
        <taxon>Scorpiopini</taxon>
        <taxon>Euscorpiops</taxon>
    </lineage>
</organism>
<name>NDBP1_EUSVA</name>
<keyword id="KW-0027">Amidation</keyword>
<keyword id="KW-0929">Antimicrobial</keyword>
<keyword id="KW-0165">Cleavage on pair of basic residues</keyword>
<keyword id="KW-0964">Secreted</keyword>
<keyword id="KW-0732">Signal</keyword>
<reference key="1">
    <citation type="journal article" date="2018" name="Theranostics">
        <title>Histidine-rich modification of a scorpion-derived peptide improves bioavailability and inhibitory activity against HSV-1.</title>
        <authorList>
            <person name="Zeng Z."/>
            <person name="Zhang R."/>
            <person name="Hong W."/>
            <person name="Cheng Y."/>
            <person name="Wang H."/>
            <person name="Lang Y."/>
            <person name="Ji Z."/>
            <person name="Wu Y."/>
            <person name="Li W."/>
            <person name="Xie Y."/>
            <person name="Cao Z."/>
        </authorList>
    </citation>
    <scope>NUCLEOTIDE SEQUENCE [MRNA]</scope>
    <scope>SYNTHESIS OF 24-36</scope>
    <scope>PROBABLE AMIDATION AT ARG-36</scope>
    <source>
        <tissue>Venom gland</tissue>
    </source>
</reference>
<sequence>MKVLPVLFLTLLVLISIPAETFCQDYNHDRDIVPPRGKRNDFFRSDVSRDDESHPSPGQK</sequence>
<dbReference type="GO" id="GO:0005576">
    <property type="term" value="C:extracellular region"/>
    <property type="evidence" value="ECO:0007669"/>
    <property type="project" value="UniProtKB-SubCell"/>
</dbReference>
<comment type="function">
    <text evidence="3">Probable antimicrobial peptide. Has no inhibitory activity against herpes simplex virus type 1 (HSV-1).</text>
</comment>
<comment type="subcellular location">
    <subcellularLocation>
        <location evidence="6">Secreted</location>
    </subcellularLocation>
</comment>
<comment type="tissue specificity">
    <text evidence="6">Expressed by the venom gland.</text>
</comment>
<comment type="similarity">
    <text evidence="5">Belongs to the non-disulfide-bridged peptide (NDBP) superfamily.</text>
</comment>
<evidence type="ECO:0000255" key="1"/>
<evidence type="ECO:0000256" key="2">
    <source>
        <dbReference type="SAM" id="MobiDB-lite"/>
    </source>
</evidence>
<evidence type="ECO:0000269" key="3">
    <source>
    </source>
</evidence>
<evidence type="ECO:0000303" key="4">
    <source>
    </source>
</evidence>
<evidence type="ECO:0000305" key="5"/>
<evidence type="ECO:0000305" key="6">
    <source>
    </source>
</evidence>
<proteinExistence type="evidence at protein level"/>
<protein>
    <recommendedName>
        <fullName evidence="4">Antimicrobial peptide Eval151</fullName>
    </recommendedName>
</protein>
<accession>P0DXZ9</accession>